<accession>Q2U6Q1</accession>
<keyword id="KW-0963">Cytoplasm</keyword>
<keyword id="KW-0489">Methyltransferase</keyword>
<keyword id="KW-1185">Reference proteome</keyword>
<keyword id="KW-0949">S-adenosyl-L-methionine</keyword>
<keyword id="KW-0808">Transferase</keyword>
<keyword id="KW-0819">tRNA processing</keyword>
<sequence length="635" mass="70783">MKNHRNKTVRDVTKLSGKPLPETLEPSSILQGTPTEQWVTSKDLLEDGLPFIPEVMKDLTVFLLGNININSTHLFRADILYDSQGVLSTPQQKELSFAQTGNTSVETTTDAEDRVEPIVAAEVAGFNLTRTVVRRLIPRNPKLDRPLEQTCHFYEADIAPGSEGATQESRLRRFLAVYTPHVASKEEIPFYHPLLRALAYLYDFTDDAAEATEAGSGSGALSLHFLPYPEEALPTRLERTLHALLNTQIRLARNTRLSETTEGGNYNPSKDNVIPQHLVQNTYSRLKFKYGKDLCRDWVEDTEPTKHVFEDLAITAFLIELWRSMYGAVPGEERNEDGPEKYDPNFPGFVDVACGNGVLVYVLLMEGYRGWGFDARRRKTWKILPEFVQARLKEEIYIPKPFTDAMAERGGVPDLGVETHSGLFEKDTFIISNHADELTVWTPLMATLACPESPLPFIAIPCCSHALSGAKYRYPPPKASKPDSDKESSQHEDVDSEQPATGDLKALRKAKQEAQTDVGFYKSMYGSLTMKAISIAEEIGYDVEKTLLRIPSTRNMGVIGGRKRVTKEWRARNQQQPASDCNGDAVTESALDKAMAAVQRECSRDGGVEGAAKIWVERAKGIHKGQGPGNQRGHC</sequence>
<gene>
    <name type="primary">trm44</name>
    <name type="ORF">AO090120000142</name>
</gene>
<evidence type="ECO:0000250" key="1"/>
<evidence type="ECO:0000256" key="2">
    <source>
        <dbReference type="SAM" id="MobiDB-lite"/>
    </source>
</evidence>
<evidence type="ECO:0000305" key="3"/>
<protein>
    <recommendedName>
        <fullName>tRNA (uracil-O(2)-)-methyltransferase</fullName>
        <ecNumber>2.1.1.211</ecNumber>
    </recommendedName>
</protein>
<organism>
    <name type="scientific">Aspergillus oryzae (strain ATCC 42149 / RIB 40)</name>
    <name type="common">Yellow koji mold</name>
    <dbReference type="NCBI Taxonomy" id="510516"/>
    <lineage>
        <taxon>Eukaryota</taxon>
        <taxon>Fungi</taxon>
        <taxon>Dikarya</taxon>
        <taxon>Ascomycota</taxon>
        <taxon>Pezizomycotina</taxon>
        <taxon>Eurotiomycetes</taxon>
        <taxon>Eurotiomycetidae</taxon>
        <taxon>Eurotiales</taxon>
        <taxon>Aspergillaceae</taxon>
        <taxon>Aspergillus</taxon>
        <taxon>Aspergillus subgen. Circumdati</taxon>
    </lineage>
</organism>
<feature type="chain" id="PRO_0000249902" description="tRNA (uracil-O(2)-)-methyltransferase">
    <location>
        <begin position="1"/>
        <end position="635"/>
    </location>
</feature>
<feature type="region of interest" description="Disordered" evidence="2">
    <location>
        <begin position="1"/>
        <end position="28"/>
    </location>
</feature>
<feature type="region of interest" description="Disordered" evidence="2">
    <location>
        <begin position="474"/>
        <end position="509"/>
    </location>
</feature>
<feature type="compositionally biased region" description="Basic and acidic residues" evidence="2">
    <location>
        <begin position="480"/>
        <end position="493"/>
    </location>
</feature>
<comment type="function">
    <text evidence="1">Probable adenosyl-L-methionine (AdoMet)-dependent tRNA (uracil-O(2)-)-methyltransferase.</text>
</comment>
<comment type="catalytic activity">
    <reaction>
        <text>uridine(44) in tRNA(Ser) + S-adenosyl-L-methionine = 2'-O-methyluridine(44) in tRNA(Ser) + S-adenosyl-L-homocysteine + H(+)</text>
        <dbReference type="Rhea" id="RHEA:43100"/>
        <dbReference type="Rhea" id="RHEA-COMP:10339"/>
        <dbReference type="Rhea" id="RHEA-COMP:10340"/>
        <dbReference type="ChEBI" id="CHEBI:15378"/>
        <dbReference type="ChEBI" id="CHEBI:57856"/>
        <dbReference type="ChEBI" id="CHEBI:59789"/>
        <dbReference type="ChEBI" id="CHEBI:65315"/>
        <dbReference type="ChEBI" id="CHEBI:74478"/>
        <dbReference type="EC" id="2.1.1.211"/>
    </reaction>
</comment>
<comment type="subcellular location">
    <subcellularLocation>
        <location evidence="1">Cytoplasm</location>
    </subcellularLocation>
</comment>
<comment type="similarity">
    <text evidence="3">Belongs to the TRM44 family.</text>
</comment>
<dbReference type="EC" id="2.1.1.211"/>
<dbReference type="EMBL" id="BA000053">
    <property type="protein sequence ID" value="BAE62764.1"/>
    <property type="molecule type" value="Genomic_DNA"/>
</dbReference>
<dbReference type="RefSeq" id="XP_001823897.1">
    <property type="nucleotide sequence ID" value="XM_001823845.2"/>
</dbReference>
<dbReference type="STRING" id="510516.Q2U6Q1"/>
<dbReference type="EnsemblFungi" id="BAE62764">
    <property type="protein sequence ID" value="BAE62764"/>
    <property type="gene ID" value="AO090120000142"/>
</dbReference>
<dbReference type="GeneID" id="5996156"/>
<dbReference type="KEGG" id="aor:AO090120000142"/>
<dbReference type="VEuPathDB" id="FungiDB:AO090120000142"/>
<dbReference type="HOGENOM" id="CLU_018580_0_0_1"/>
<dbReference type="OMA" id="IREPNIN"/>
<dbReference type="OrthoDB" id="125788at5052"/>
<dbReference type="Proteomes" id="UP000006564">
    <property type="component" value="Chromosome 5"/>
</dbReference>
<dbReference type="GO" id="GO:0005737">
    <property type="term" value="C:cytoplasm"/>
    <property type="evidence" value="ECO:0007669"/>
    <property type="project" value="UniProtKB-SubCell"/>
</dbReference>
<dbReference type="GO" id="GO:0141101">
    <property type="term" value="F:tRNA(Ser) (uridine(44)-2'-O-)-methyltransferase activity"/>
    <property type="evidence" value="ECO:0007669"/>
    <property type="project" value="UniProtKB-EC"/>
</dbReference>
<dbReference type="GO" id="GO:0030488">
    <property type="term" value="P:tRNA methylation"/>
    <property type="evidence" value="ECO:0007669"/>
    <property type="project" value="TreeGrafter"/>
</dbReference>
<dbReference type="InterPro" id="IPR011671">
    <property type="entry name" value="tRNA_uracil_MeTrfase"/>
</dbReference>
<dbReference type="PANTHER" id="PTHR21210">
    <property type="entry name" value="TRNA (URACIL-O(2)-)-METHYLTRANSFERASE-RELATED"/>
    <property type="match status" value="1"/>
</dbReference>
<dbReference type="PANTHER" id="PTHR21210:SF0">
    <property type="entry name" value="TRNA (URACIL-O(2)-)-METHYLTRANSFERASE-RELATED"/>
    <property type="match status" value="1"/>
</dbReference>
<dbReference type="Pfam" id="PF07757">
    <property type="entry name" value="AdoMet_MTase"/>
    <property type="match status" value="1"/>
</dbReference>
<name>TRM44_ASPOR</name>
<reference key="1">
    <citation type="journal article" date="2005" name="Nature">
        <title>Genome sequencing and analysis of Aspergillus oryzae.</title>
        <authorList>
            <person name="Machida M."/>
            <person name="Asai K."/>
            <person name="Sano M."/>
            <person name="Tanaka T."/>
            <person name="Kumagai T."/>
            <person name="Terai G."/>
            <person name="Kusumoto K."/>
            <person name="Arima T."/>
            <person name="Akita O."/>
            <person name="Kashiwagi Y."/>
            <person name="Abe K."/>
            <person name="Gomi K."/>
            <person name="Horiuchi H."/>
            <person name="Kitamoto K."/>
            <person name="Kobayashi T."/>
            <person name="Takeuchi M."/>
            <person name="Denning D.W."/>
            <person name="Galagan J.E."/>
            <person name="Nierman W.C."/>
            <person name="Yu J."/>
            <person name="Archer D.B."/>
            <person name="Bennett J.W."/>
            <person name="Bhatnagar D."/>
            <person name="Cleveland T.E."/>
            <person name="Fedorova N.D."/>
            <person name="Gotoh O."/>
            <person name="Horikawa H."/>
            <person name="Hosoyama A."/>
            <person name="Ichinomiya M."/>
            <person name="Igarashi R."/>
            <person name="Iwashita K."/>
            <person name="Juvvadi P.R."/>
            <person name="Kato M."/>
            <person name="Kato Y."/>
            <person name="Kin T."/>
            <person name="Kokubun A."/>
            <person name="Maeda H."/>
            <person name="Maeyama N."/>
            <person name="Maruyama J."/>
            <person name="Nagasaki H."/>
            <person name="Nakajima T."/>
            <person name="Oda K."/>
            <person name="Okada K."/>
            <person name="Paulsen I."/>
            <person name="Sakamoto K."/>
            <person name="Sawano T."/>
            <person name="Takahashi M."/>
            <person name="Takase K."/>
            <person name="Terabayashi Y."/>
            <person name="Wortman J.R."/>
            <person name="Yamada O."/>
            <person name="Yamagata Y."/>
            <person name="Anazawa H."/>
            <person name="Hata Y."/>
            <person name="Koide Y."/>
            <person name="Komori T."/>
            <person name="Koyama Y."/>
            <person name="Minetoki T."/>
            <person name="Suharnan S."/>
            <person name="Tanaka A."/>
            <person name="Isono K."/>
            <person name="Kuhara S."/>
            <person name="Ogasawara N."/>
            <person name="Kikuchi H."/>
        </authorList>
    </citation>
    <scope>NUCLEOTIDE SEQUENCE [LARGE SCALE GENOMIC DNA]</scope>
    <source>
        <strain>ATCC 42149 / RIB 40</strain>
    </source>
</reference>
<proteinExistence type="inferred from homology"/>